<organism>
    <name type="scientific">Escherichia coli O127:H6 (strain E2348/69 / EPEC)</name>
    <dbReference type="NCBI Taxonomy" id="574521"/>
    <lineage>
        <taxon>Bacteria</taxon>
        <taxon>Pseudomonadati</taxon>
        <taxon>Pseudomonadota</taxon>
        <taxon>Gammaproteobacteria</taxon>
        <taxon>Enterobacterales</taxon>
        <taxon>Enterobacteriaceae</taxon>
        <taxon>Escherichia</taxon>
    </lineage>
</organism>
<name>CAIA_ECO27</name>
<reference key="1">
    <citation type="journal article" date="2009" name="J. Bacteriol.">
        <title>Complete genome sequence and comparative genome analysis of enteropathogenic Escherichia coli O127:H6 strain E2348/69.</title>
        <authorList>
            <person name="Iguchi A."/>
            <person name="Thomson N.R."/>
            <person name="Ogura Y."/>
            <person name="Saunders D."/>
            <person name="Ooka T."/>
            <person name="Henderson I.R."/>
            <person name="Harris D."/>
            <person name="Asadulghani M."/>
            <person name="Kurokawa K."/>
            <person name="Dean P."/>
            <person name="Kenny B."/>
            <person name="Quail M.A."/>
            <person name="Thurston S."/>
            <person name="Dougan G."/>
            <person name="Hayashi T."/>
            <person name="Parkhill J."/>
            <person name="Frankel G."/>
        </authorList>
    </citation>
    <scope>NUCLEOTIDE SEQUENCE [LARGE SCALE GENOMIC DNA]</scope>
    <source>
        <strain>E2348/69 / EPEC</strain>
    </source>
</reference>
<proteinExistence type="inferred from homology"/>
<keyword id="KW-0963">Cytoplasm</keyword>
<keyword id="KW-0274">FAD</keyword>
<keyword id="KW-0285">Flavoprotein</keyword>
<keyword id="KW-0560">Oxidoreductase</keyword>
<keyword id="KW-1185">Reference proteome</keyword>
<protein>
    <recommendedName>
        <fullName evidence="1">Crotonobetainyl-CoA reductase</fullName>
        <ecNumber evidence="1">1.3.8.13</ecNumber>
    </recommendedName>
    <alternativeName>
        <fullName evidence="1">Crotonobetainyl-CoA dehydrogenase</fullName>
    </alternativeName>
</protein>
<accession>B7UI85</accession>
<feature type="chain" id="PRO_1000149626" description="Crotonobetainyl-CoA reductase">
    <location>
        <begin position="1"/>
        <end position="380"/>
    </location>
</feature>
<comment type="function">
    <text evidence="1">Catalyzes the reduction of crotonobetainyl-CoA to gamma-butyrobetainyl-CoA.</text>
</comment>
<comment type="catalytic activity">
    <reaction evidence="1">
        <text>4-(trimethylamino)butanoyl-CoA + oxidized [electron-transfer flavoprotein] + H(+) = crotonobetainyl-CoA + reduced [electron-transfer flavoprotein]</text>
        <dbReference type="Rhea" id="RHEA:51584"/>
        <dbReference type="Rhea" id="RHEA-COMP:10685"/>
        <dbReference type="Rhea" id="RHEA-COMP:10686"/>
        <dbReference type="ChEBI" id="CHEBI:15378"/>
        <dbReference type="ChEBI" id="CHEBI:57692"/>
        <dbReference type="ChEBI" id="CHEBI:58307"/>
        <dbReference type="ChEBI" id="CHEBI:60933"/>
        <dbReference type="ChEBI" id="CHEBI:61513"/>
        <dbReference type="EC" id="1.3.8.13"/>
    </reaction>
</comment>
<comment type="cofactor">
    <cofactor evidence="1">
        <name>FAD</name>
        <dbReference type="ChEBI" id="CHEBI:57692"/>
    </cofactor>
</comment>
<comment type="pathway">
    <text evidence="1">Amine and polyamine metabolism; carnitine metabolism.</text>
</comment>
<comment type="subunit">
    <text evidence="1">Homotetramer.</text>
</comment>
<comment type="subcellular location">
    <subcellularLocation>
        <location evidence="1">Cytoplasm</location>
    </subcellularLocation>
</comment>
<comment type="similarity">
    <text evidence="1">Belongs to the acyl-CoA dehydrogenase family.</text>
</comment>
<sequence length="380" mass="42558">MDFNLNDEQELFVAGIRELMASENWEAYFAECDRDSVYPERFVKALADMGIDSLLIPEEHGGLDAGFVTLAAVWMELGRLGAPTYVLYQLPGGFNTFLREGTQEQIDKIMAFRGTGKQMWNSAITEPGAGSDVGSLKTTYTRRNGKIYLNGSKCFITSSAYTPYIVVMARDGASPDKPVYTEWFVDMSKPGIKVTKLEKLGLRMDSCCEITFDDVELDEKDMFGREGNGFNRVKEEFDHERFLVALTNYGTAMCAFEDAARYANQRVQFGEAIGRFQLIQEKFAHMAIKLNSMKNMLYEAAWKADNGTITSGDAAMCKYFCANAAFEVVDSAMQVLGGVGIAGNHRISRFWRDLRVDRVSGGSDEMQILTLGRAVLKQYR</sequence>
<gene>
    <name evidence="1" type="primary">caiA</name>
    <name type="ordered locus">E2348C_0040</name>
</gene>
<evidence type="ECO:0000255" key="1">
    <source>
        <dbReference type="HAMAP-Rule" id="MF_01052"/>
    </source>
</evidence>
<dbReference type="EC" id="1.3.8.13" evidence="1"/>
<dbReference type="EMBL" id="FM180568">
    <property type="protein sequence ID" value="CAS07588.1"/>
    <property type="molecule type" value="Genomic_DNA"/>
</dbReference>
<dbReference type="RefSeq" id="WP_000347117.1">
    <property type="nucleotide sequence ID" value="NC_011601.1"/>
</dbReference>
<dbReference type="SMR" id="B7UI85"/>
<dbReference type="GeneID" id="93777396"/>
<dbReference type="KEGG" id="ecg:E2348C_0040"/>
<dbReference type="HOGENOM" id="CLU_018204_0_2_6"/>
<dbReference type="UniPathway" id="UPA00117"/>
<dbReference type="Proteomes" id="UP000008205">
    <property type="component" value="Chromosome"/>
</dbReference>
<dbReference type="GO" id="GO:0005737">
    <property type="term" value="C:cytoplasm"/>
    <property type="evidence" value="ECO:0007669"/>
    <property type="project" value="UniProtKB-SubCell"/>
</dbReference>
<dbReference type="GO" id="GO:0003995">
    <property type="term" value="F:acyl-CoA dehydrogenase activity"/>
    <property type="evidence" value="ECO:0007669"/>
    <property type="project" value="InterPro"/>
</dbReference>
<dbReference type="GO" id="GO:0050660">
    <property type="term" value="F:flavin adenine dinucleotide binding"/>
    <property type="evidence" value="ECO:0007669"/>
    <property type="project" value="InterPro"/>
</dbReference>
<dbReference type="GO" id="GO:0009437">
    <property type="term" value="P:carnitine metabolic process"/>
    <property type="evidence" value="ECO:0007669"/>
    <property type="project" value="UniProtKB-UniRule"/>
</dbReference>
<dbReference type="CDD" id="cd00567">
    <property type="entry name" value="ACAD"/>
    <property type="match status" value="1"/>
</dbReference>
<dbReference type="FunFam" id="1.20.140.10:FF:000001">
    <property type="entry name" value="Acyl-CoA dehydrogenase"/>
    <property type="match status" value="1"/>
</dbReference>
<dbReference type="FunFam" id="2.40.110.10:FF:000002">
    <property type="entry name" value="Acyl-CoA dehydrogenase fadE12"/>
    <property type="match status" value="1"/>
</dbReference>
<dbReference type="FunFam" id="1.10.540.10:FF:000005">
    <property type="entry name" value="Crotonobetainyl-CoA reductase"/>
    <property type="match status" value="1"/>
</dbReference>
<dbReference type="Gene3D" id="1.10.540.10">
    <property type="entry name" value="Acyl-CoA dehydrogenase/oxidase, N-terminal domain"/>
    <property type="match status" value="1"/>
</dbReference>
<dbReference type="Gene3D" id="2.40.110.10">
    <property type="entry name" value="Butyryl-CoA Dehydrogenase, subunit A, domain 2"/>
    <property type="match status" value="1"/>
</dbReference>
<dbReference type="Gene3D" id="1.20.140.10">
    <property type="entry name" value="Butyryl-CoA Dehydrogenase, subunit A, domain 3"/>
    <property type="match status" value="1"/>
</dbReference>
<dbReference type="HAMAP" id="MF_01052">
    <property type="entry name" value="CaiA"/>
    <property type="match status" value="1"/>
</dbReference>
<dbReference type="InterPro" id="IPR006089">
    <property type="entry name" value="Acyl-CoA_DH_CS"/>
</dbReference>
<dbReference type="InterPro" id="IPR006091">
    <property type="entry name" value="Acyl-CoA_Oxase/DH_mid-dom"/>
</dbReference>
<dbReference type="InterPro" id="IPR046373">
    <property type="entry name" value="Acyl-CoA_Oxase/DH_mid-dom_sf"/>
</dbReference>
<dbReference type="InterPro" id="IPR036250">
    <property type="entry name" value="AcylCo_DH-like_C"/>
</dbReference>
<dbReference type="InterPro" id="IPR009075">
    <property type="entry name" value="AcylCo_DH/oxidase_C"/>
</dbReference>
<dbReference type="InterPro" id="IPR013786">
    <property type="entry name" value="AcylCoA_DH/ox_N"/>
</dbReference>
<dbReference type="InterPro" id="IPR037069">
    <property type="entry name" value="AcylCoA_DH/ox_N_sf"/>
</dbReference>
<dbReference type="InterPro" id="IPR009100">
    <property type="entry name" value="AcylCoA_DH/oxidase_NM_dom_sf"/>
</dbReference>
<dbReference type="InterPro" id="IPR023450">
    <property type="entry name" value="CaiA"/>
</dbReference>
<dbReference type="NCBIfam" id="NF002885">
    <property type="entry name" value="PRK03354.1"/>
    <property type="match status" value="1"/>
</dbReference>
<dbReference type="PANTHER" id="PTHR43884">
    <property type="entry name" value="ACYL-COA DEHYDROGENASE"/>
    <property type="match status" value="1"/>
</dbReference>
<dbReference type="PANTHER" id="PTHR43884:SF12">
    <property type="entry name" value="ISOVALERYL-COA DEHYDROGENASE, MITOCHONDRIAL-RELATED"/>
    <property type="match status" value="1"/>
</dbReference>
<dbReference type="Pfam" id="PF00441">
    <property type="entry name" value="Acyl-CoA_dh_1"/>
    <property type="match status" value="1"/>
</dbReference>
<dbReference type="Pfam" id="PF02770">
    <property type="entry name" value="Acyl-CoA_dh_M"/>
    <property type="match status" value="1"/>
</dbReference>
<dbReference type="Pfam" id="PF02771">
    <property type="entry name" value="Acyl-CoA_dh_N"/>
    <property type="match status" value="1"/>
</dbReference>
<dbReference type="PIRSF" id="PIRSF016578">
    <property type="entry name" value="HsaA"/>
    <property type="match status" value="1"/>
</dbReference>
<dbReference type="SUPFAM" id="SSF47203">
    <property type="entry name" value="Acyl-CoA dehydrogenase C-terminal domain-like"/>
    <property type="match status" value="1"/>
</dbReference>
<dbReference type="SUPFAM" id="SSF56645">
    <property type="entry name" value="Acyl-CoA dehydrogenase NM domain-like"/>
    <property type="match status" value="1"/>
</dbReference>
<dbReference type="PROSITE" id="PS00072">
    <property type="entry name" value="ACYL_COA_DH_1"/>
    <property type="match status" value="1"/>
</dbReference>
<dbReference type="PROSITE" id="PS00073">
    <property type="entry name" value="ACYL_COA_DH_2"/>
    <property type="match status" value="1"/>
</dbReference>